<proteinExistence type="predicted"/>
<organism>
    <name type="scientific">Corynebacterium glutamicum (strain ATCC 13032 / DSM 20300 / JCM 1318 / BCRC 11384 / CCUG 27702 / LMG 3730 / NBRC 12168 / NCIMB 10025 / NRRL B-2784 / 534)</name>
    <dbReference type="NCBI Taxonomy" id="196627"/>
    <lineage>
        <taxon>Bacteria</taxon>
        <taxon>Bacillati</taxon>
        <taxon>Actinomycetota</taxon>
        <taxon>Actinomycetes</taxon>
        <taxon>Mycobacteriales</taxon>
        <taxon>Corynebacteriaceae</taxon>
        <taxon>Corynebacterium</taxon>
    </lineage>
</organism>
<comment type="subunit">
    <text>Has been detected in a cytochrome bc1-aa3 supercomplex; its deletion however leaves complex activity unaffected.</text>
</comment>
<feature type="chain" id="PRO_0000214039" description="Uncharacterized protein Cgl2226/cg2444">
    <location>
        <begin position="1"/>
        <end position="181"/>
    </location>
</feature>
<feature type="region of interest" description="Disordered" evidence="1">
    <location>
        <begin position="143"/>
        <end position="181"/>
    </location>
</feature>
<feature type="compositionally biased region" description="Gly residues" evidence="1">
    <location>
        <begin position="143"/>
        <end position="156"/>
    </location>
</feature>
<feature type="compositionally biased region" description="Gly residues" evidence="1">
    <location>
        <begin position="170"/>
        <end position="181"/>
    </location>
</feature>
<protein>
    <recommendedName>
        <fullName>Uncharacterized protein Cgl2226/cg2444</fullName>
        <shortName>P24</shortName>
    </recommendedName>
</protein>
<accession>Q8NNH6</accession>
<accession>Q6M3L3</accession>
<dbReference type="EMBL" id="BA000036">
    <property type="protein sequence ID" value="BAB99619.1"/>
    <property type="molecule type" value="Genomic_DNA"/>
</dbReference>
<dbReference type="EMBL" id="BX927154">
    <property type="protein sequence ID" value="CAF20567.1"/>
    <property type="molecule type" value="Genomic_DNA"/>
</dbReference>
<dbReference type="RefSeq" id="NP_601429.1">
    <property type="nucleotide sequence ID" value="NC_003450.3"/>
</dbReference>
<dbReference type="STRING" id="196627.cg2444"/>
<dbReference type="KEGG" id="cgb:cg2444"/>
<dbReference type="KEGG" id="cgl:Cgl2226"/>
<dbReference type="PATRIC" id="fig|196627.13.peg.2163"/>
<dbReference type="eggNOG" id="ENOG50307W2">
    <property type="taxonomic scope" value="Bacteria"/>
</dbReference>
<dbReference type="HOGENOM" id="CLU_1486695_0_0_11"/>
<dbReference type="OrthoDB" id="4412344at2"/>
<dbReference type="BioCyc" id="CORYNE:G18NG-11818-MONOMER"/>
<dbReference type="Proteomes" id="UP000000582">
    <property type="component" value="Chromosome"/>
</dbReference>
<dbReference type="Proteomes" id="UP000001009">
    <property type="component" value="Chromosome"/>
</dbReference>
<evidence type="ECO:0000256" key="1">
    <source>
        <dbReference type="SAM" id="MobiDB-lite"/>
    </source>
</evidence>
<gene>
    <name type="ordered locus">Cgl2226</name>
    <name type="ordered locus">cg2444</name>
</gene>
<name>Y2226_CORGL</name>
<keyword id="KW-1185">Reference proteome</keyword>
<reference key="1">
    <citation type="journal article" date="2003" name="Appl. Microbiol. Biotechnol.">
        <title>The Corynebacterium glutamicum genome: features and impacts on biotechnological processes.</title>
        <authorList>
            <person name="Ikeda M."/>
            <person name="Nakagawa S."/>
        </authorList>
    </citation>
    <scope>NUCLEOTIDE SEQUENCE [LARGE SCALE GENOMIC DNA]</scope>
    <source>
        <strain>ATCC 13032 / DSM 20300 / JCM 1318 / BCRC 11384 / CCUG 27702 / LMG 3730 / NBRC 12168 / NCIMB 10025 / NRRL B-2784 / 534</strain>
    </source>
</reference>
<reference key="2">
    <citation type="journal article" date="2003" name="J. Biotechnol.">
        <title>The complete Corynebacterium glutamicum ATCC 13032 genome sequence and its impact on the production of L-aspartate-derived amino acids and vitamins.</title>
        <authorList>
            <person name="Kalinowski J."/>
            <person name="Bathe B."/>
            <person name="Bartels D."/>
            <person name="Bischoff N."/>
            <person name="Bott M."/>
            <person name="Burkovski A."/>
            <person name="Dusch N."/>
            <person name="Eggeling L."/>
            <person name="Eikmanns B.J."/>
            <person name="Gaigalat L."/>
            <person name="Goesmann A."/>
            <person name="Hartmann M."/>
            <person name="Huthmacher K."/>
            <person name="Kraemer R."/>
            <person name="Linke B."/>
            <person name="McHardy A.C."/>
            <person name="Meyer F."/>
            <person name="Moeckel B."/>
            <person name="Pfefferle W."/>
            <person name="Puehler A."/>
            <person name="Rey D.A."/>
            <person name="Rueckert C."/>
            <person name="Rupp O."/>
            <person name="Sahm H."/>
            <person name="Wendisch V.F."/>
            <person name="Wiegraebe I."/>
            <person name="Tauch A."/>
        </authorList>
    </citation>
    <scope>NUCLEOTIDE SEQUENCE [LARGE SCALE GENOMIC DNA]</scope>
    <source>
        <strain>ATCC 13032 / DSM 20300 / JCM 1318 / BCRC 11384 / CCUG 27702 / LMG 3730 / NBRC 12168 / NCIMB 10025 / NRRL B-2784 / 534</strain>
    </source>
</reference>
<reference key="3">
    <citation type="journal article" date="2003" name="J. Biol. Chem.">
        <title>Purification of a cytochrome bc1-aa3 supercomplex with quinol oxidase activity from Corynebacterium glutamicum. Identification of a fourth subunity of cytochrome aa3 oxidase and mutational analysis of diheme cytochrome c1.</title>
        <authorList>
            <person name="Niebisch A."/>
            <person name="Bott M."/>
        </authorList>
    </citation>
    <scope>DETECTION IN A SUPERCOMPLEX WITH CYTOCHROME BC1-AA3</scope>
    <source>
        <strain>ATCC 13032 / DSM 20300 / JCM 1318 / BCRC 11384 / CCUG 27702 / LMG 3730 / NBRC 12168 / NCIMB 10025 / NRRL B-2784 / 534</strain>
    </source>
</reference>
<sequence length="181" mass="19842">MVRSLGCKAHFGTRQEVRNSTMAIKLSIDLSDATFAELSAVIGYAHQLGVDADEKLTFEGTVLNIEFDGDLQFDDVFDAFDEAEIELDNPREDGPIYADDLIDEDEDYRAQTKSQINDEVINEIRDGISSFVDGIVNGLGQGRRGGRYGDFGGPRGPRGPRNDGPFGPFGPFGPGYRGPRF</sequence>